<reference key="1">
    <citation type="journal article" date="2011" name="PLoS ONE">
        <title>The genome of Akkermansia muciniphila, a dedicated intestinal mucin degrader, and its use in exploring intestinal metagenomes.</title>
        <authorList>
            <person name="van Passel M.W."/>
            <person name="Kant R."/>
            <person name="Zoetendal E.G."/>
            <person name="Plugge C.M."/>
            <person name="Derrien M."/>
            <person name="Malfatti S.A."/>
            <person name="Chain P.S."/>
            <person name="Woyke T."/>
            <person name="Palva A."/>
            <person name="de Vos W.M."/>
            <person name="Smidt H."/>
        </authorList>
    </citation>
    <scope>NUCLEOTIDE SEQUENCE [LARGE SCALE GENOMIC DNA]</scope>
    <source>
        <strain>ATCC BAA-835 / DSM 22959 / JCM 33894 / BCRC 81048 / CCUG 64013 / CIP 107961 / Muc</strain>
    </source>
</reference>
<organism>
    <name type="scientific">Akkermansia muciniphila (strain ATCC BAA-835 / DSM 22959 / JCM 33894 / BCRC 81048 / CCUG 64013 / CIP 107961 / Muc)</name>
    <dbReference type="NCBI Taxonomy" id="349741"/>
    <lineage>
        <taxon>Bacteria</taxon>
        <taxon>Pseudomonadati</taxon>
        <taxon>Verrucomicrobiota</taxon>
        <taxon>Verrucomicrobiia</taxon>
        <taxon>Verrucomicrobiales</taxon>
        <taxon>Akkermansiaceae</taxon>
        <taxon>Akkermansia</taxon>
    </lineage>
</organism>
<evidence type="ECO:0000250" key="1"/>
<evidence type="ECO:0000255" key="2">
    <source>
        <dbReference type="HAMAP-Rule" id="MF_01109"/>
    </source>
</evidence>
<feature type="chain" id="PRO_1000163958" description="Ornithine carbamoyltransferase">
    <location>
        <begin position="1"/>
        <end position="305"/>
    </location>
</feature>
<feature type="binding site" evidence="2">
    <location>
        <begin position="50"/>
        <end position="53"/>
    </location>
    <ligand>
        <name>carbamoyl phosphate</name>
        <dbReference type="ChEBI" id="CHEBI:58228"/>
    </ligand>
</feature>
<feature type="binding site" evidence="2">
    <location>
        <position position="77"/>
    </location>
    <ligand>
        <name>carbamoyl phosphate</name>
        <dbReference type="ChEBI" id="CHEBI:58228"/>
    </ligand>
</feature>
<feature type="binding site" evidence="2">
    <location>
        <position position="101"/>
    </location>
    <ligand>
        <name>carbamoyl phosphate</name>
        <dbReference type="ChEBI" id="CHEBI:58228"/>
    </ligand>
</feature>
<feature type="binding site" evidence="2">
    <location>
        <begin position="128"/>
        <end position="131"/>
    </location>
    <ligand>
        <name>carbamoyl phosphate</name>
        <dbReference type="ChEBI" id="CHEBI:58228"/>
    </ligand>
</feature>
<feature type="binding site" evidence="2">
    <location>
        <position position="162"/>
    </location>
    <ligand>
        <name>L-ornithine</name>
        <dbReference type="ChEBI" id="CHEBI:46911"/>
    </ligand>
</feature>
<feature type="binding site" evidence="2">
    <location>
        <position position="220"/>
    </location>
    <ligand>
        <name>L-ornithine</name>
        <dbReference type="ChEBI" id="CHEBI:46911"/>
    </ligand>
</feature>
<feature type="binding site" evidence="2">
    <location>
        <begin position="224"/>
        <end position="225"/>
    </location>
    <ligand>
        <name>L-ornithine</name>
        <dbReference type="ChEBI" id="CHEBI:46911"/>
    </ligand>
</feature>
<feature type="binding site" evidence="2">
    <location>
        <begin position="260"/>
        <end position="261"/>
    </location>
    <ligand>
        <name>carbamoyl phosphate</name>
        <dbReference type="ChEBI" id="CHEBI:58228"/>
    </ligand>
</feature>
<feature type="binding site" evidence="2">
    <location>
        <position position="288"/>
    </location>
    <ligand>
        <name>carbamoyl phosphate</name>
        <dbReference type="ChEBI" id="CHEBI:58228"/>
    </ligand>
</feature>
<protein>
    <recommendedName>
        <fullName evidence="2">Ornithine carbamoyltransferase</fullName>
        <shortName evidence="2">OTCase</shortName>
        <ecNumber evidence="2">2.1.3.3</ecNumber>
    </recommendedName>
</protein>
<keyword id="KW-0056">Arginine metabolism</keyword>
<keyword id="KW-0963">Cytoplasm</keyword>
<keyword id="KW-1185">Reference proteome</keyword>
<keyword id="KW-0808">Transferase</keyword>
<name>OTC_AKKM8</name>
<comment type="function">
    <text evidence="1">Reversibly catalyzes the transfer of the carbamoyl group from carbamoyl phosphate (CP) to the N(epsilon) atom of ornithine (ORN) to produce L-citrulline.</text>
</comment>
<comment type="catalytic activity">
    <reaction evidence="2">
        <text>carbamoyl phosphate + L-ornithine = L-citrulline + phosphate + H(+)</text>
        <dbReference type="Rhea" id="RHEA:19513"/>
        <dbReference type="ChEBI" id="CHEBI:15378"/>
        <dbReference type="ChEBI" id="CHEBI:43474"/>
        <dbReference type="ChEBI" id="CHEBI:46911"/>
        <dbReference type="ChEBI" id="CHEBI:57743"/>
        <dbReference type="ChEBI" id="CHEBI:58228"/>
        <dbReference type="EC" id="2.1.3.3"/>
    </reaction>
</comment>
<comment type="pathway">
    <text evidence="2">Amino-acid degradation; L-arginine degradation via ADI pathway; carbamoyl phosphate from L-arginine: step 2/2.</text>
</comment>
<comment type="subcellular location">
    <subcellularLocation>
        <location evidence="2">Cytoplasm</location>
    </subcellularLocation>
</comment>
<comment type="similarity">
    <text evidence="2">Belongs to the aspartate/ornithine carbamoyltransferase superfamily. OTCase family.</text>
</comment>
<dbReference type="EC" id="2.1.3.3" evidence="2"/>
<dbReference type="EMBL" id="CP001071">
    <property type="protein sequence ID" value="ACD05572.1"/>
    <property type="molecule type" value="Genomic_DNA"/>
</dbReference>
<dbReference type="SMR" id="B2UML6"/>
<dbReference type="STRING" id="349741.Amuc_1754"/>
<dbReference type="PaxDb" id="349741-Amuc_1754"/>
<dbReference type="KEGG" id="amu:Amuc_1754"/>
<dbReference type="eggNOG" id="COG0078">
    <property type="taxonomic scope" value="Bacteria"/>
</dbReference>
<dbReference type="HOGENOM" id="CLU_043846_3_2_0"/>
<dbReference type="OrthoDB" id="9802587at2"/>
<dbReference type="BioCyc" id="AMUC349741:G1GBX-1870-MONOMER"/>
<dbReference type="UniPathway" id="UPA00254">
    <property type="reaction ID" value="UER00365"/>
</dbReference>
<dbReference type="Proteomes" id="UP000001031">
    <property type="component" value="Chromosome"/>
</dbReference>
<dbReference type="GO" id="GO:0005737">
    <property type="term" value="C:cytoplasm"/>
    <property type="evidence" value="ECO:0007669"/>
    <property type="project" value="UniProtKB-SubCell"/>
</dbReference>
<dbReference type="GO" id="GO:0016597">
    <property type="term" value="F:amino acid binding"/>
    <property type="evidence" value="ECO:0007669"/>
    <property type="project" value="InterPro"/>
</dbReference>
<dbReference type="GO" id="GO:0004585">
    <property type="term" value="F:ornithine carbamoyltransferase activity"/>
    <property type="evidence" value="ECO:0007669"/>
    <property type="project" value="UniProtKB-UniRule"/>
</dbReference>
<dbReference type="GO" id="GO:0042450">
    <property type="term" value="P:arginine biosynthetic process via ornithine"/>
    <property type="evidence" value="ECO:0007669"/>
    <property type="project" value="TreeGrafter"/>
</dbReference>
<dbReference type="GO" id="GO:0019547">
    <property type="term" value="P:arginine catabolic process to ornithine"/>
    <property type="evidence" value="ECO:0007669"/>
    <property type="project" value="UniProtKB-UniRule"/>
</dbReference>
<dbReference type="GO" id="GO:0019240">
    <property type="term" value="P:citrulline biosynthetic process"/>
    <property type="evidence" value="ECO:0007669"/>
    <property type="project" value="TreeGrafter"/>
</dbReference>
<dbReference type="FunFam" id="3.40.50.1370:FF:000008">
    <property type="entry name" value="Ornithine carbamoyltransferase"/>
    <property type="match status" value="1"/>
</dbReference>
<dbReference type="Gene3D" id="3.40.50.1370">
    <property type="entry name" value="Aspartate/ornithine carbamoyltransferase"/>
    <property type="match status" value="2"/>
</dbReference>
<dbReference type="HAMAP" id="MF_01109">
    <property type="entry name" value="OTCase"/>
    <property type="match status" value="1"/>
</dbReference>
<dbReference type="InterPro" id="IPR006132">
    <property type="entry name" value="Asp/Orn_carbamoyltranf_P-bd"/>
</dbReference>
<dbReference type="InterPro" id="IPR006130">
    <property type="entry name" value="Asp/Orn_carbamoylTrfase"/>
</dbReference>
<dbReference type="InterPro" id="IPR036901">
    <property type="entry name" value="Asp/Orn_carbamoylTrfase_sf"/>
</dbReference>
<dbReference type="InterPro" id="IPR006131">
    <property type="entry name" value="Asp_carbamoyltransf_Asp/Orn-bd"/>
</dbReference>
<dbReference type="InterPro" id="IPR002292">
    <property type="entry name" value="Orn/put_carbamltrans"/>
</dbReference>
<dbReference type="InterPro" id="IPR024904">
    <property type="entry name" value="OTCase_ArgI"/>
</dbReference>
<dbReference type="NCBIfam" id="TIGR00658">
    <property type="entry name" value="orni_carb_tr"/>
    <property type="match status" value="1"/>
</dbReference>
<dbReference type="NCBIfam" id="NF001986">
    <property type="entry name" value="PRK00779.1"/>
    <property type="match status" value="1"/>
</dbReference>
<dbReference type="PANTHER" id="PTHR45753">
    <property type="entry name" value="ORNITHINE CARBAMOYLTRANSFERASE, MITOCHONDRIAL"/>
    <property type="match status" value="1"/>
</dbReference>
<dbReference type="PANTHER" id="PTHR45753:SF3">
    <property type="entry name" value="ORNITHINE TRANSCARBAMYLASE, MITOCHONDRIAL"/>
    <property type="match status" value="1"/>
</dbReference>
<dbReference type="Pfam" id="PF00185">
    <property type="entry name" value="OTCace"/>
    <property type="match status" value="1"/>
</dbReference>
<dbReference type="Pfam" id="PF02729">
    <property type="entry name" value="OTCace_N"/>
    <property type="match status" value="1"/>
</dbReference>
<dbReference type="PRINTS" id="PR00100">
    <property type="entry name" value="AOTCASE"/>
</dbReference>
<dbReference type="PRINTS" id="PR00102">
    <property type="entry name" value="OTCASE"/>
</dbReference>
<dbReference type="SUPFAM" id="SSF53671">
    <property type="entry name" value="Aspartate/ornithine carbamoyltransferase"/>
    <property type="match status" value="1"/>
</dbReference>
<dbReference type="PROSITE" id="PS00097">
    <property type="entry name" value="CARBAMOYLTRANSFERASE"/>
    <property type="match status" value="1"/>
</dbReference>
<accession>B2UML6</accession>
<sequence length="305" mass="34145">MNNLLSIEQLTGDEIRDLLALGHRLKAERGHHERLPLKGQTWALIFSKSSTRTRVSFEVGISELGGRPMFLSVHDIQLGRGEPIKDTARVLGRMIHGAAIRTYGQQEVEEFASFSGIPTINALTDEEHPCQILADLLTIEEIYGPGSWKDMKIAFVGDGDNNMSRSWMWAAKRLGFTLAIGAPTNYLPLEDFRRHLDCENVIFTTDPVEAVKGASVINTDVWLSMGQESEGLSKEKHFYPYQVNRELLEHAASGHSVFHCLPAYRGKEITEDVLEHFAPVIFREAENRVHAQKAVLATLADARRG</sequence>
<proteinExistence type="inferred from homology"/>
<gene>
    <name evidence="2" type="primary">arcB</name>
    <name type="ordered locus">Amuc_1754</name>
</gene>